<comment type="function">
    <text evidence="1 5">Component of the EvC complex that positively regulates ciliary Hedgehog (Hh) signaling (PubMed:24582806). Required for proper limb morphogenesis (By similarity).</text>
</comment>
<comment type="subunit">
    <text evidence="5">Component of the EvC complex composed of EFCAB7, IQCE, EVC2 and EVC; built from two subcomplexes, EVC2:EVC and EFCAB7:IQCE (PubMed:24582806). Interacts (via N-terminus) with EFCAB7 (via EF-hands 1 and 2); this interaction anchors the EVC-EVC2 complex in a signaling microdomain at the base of cilia and stimulates the Hedgehog (Hh) pathway. Interacts with EVC2 (via N-terminal end) (PubMed:24582806). Interacts with EVC (PubMed:24582806).</text>
</comment>
<comment type="subcellular location">
    <subcellularLocation>
        <location evidence="5">Cell projection</location>
        <location evidence="5">Cilium membrane</location>
        <topology evidence="5">Peripheral membrane protein</topology>
        <orientation evidence="5">Cytoplasmic side</orientation>
    </subcellularLocation>
    <text evidence="5">The EvC complex localizes at the base of cilia in the EvC zone of primary cilia in a EFCAB7-dependent manner (PubMed:24582806).</text>
</comment>
<comment type="alternative products">
    <event type="alternative splicing"/>
    <isoform>
        <id>Q6PCQ0-1</id>
        <name>1</name>
        <sequence type="displayed"/>
    </isoform>
    <isoform>
        <id>Q6PCQ0-2</id>
        <name>2</name>
        <sequence type="described" ref="VSP_024436 VSP_024439"/>
    </isoform>
    <isoform>
        <id>Q6PCQ0-3</id>
        <name>3</name>
        <sequence type="described" ref="VSP_024436 VSP_024437 VSP_024438"/>
    </isoform>
</comment>
<dbReference type="EMBL" id="AK006472">
    <property type="protein sequence ID" value="BAB24605.1"/>
    <property type="molecule type" value="mRNA"/>
</dbReference>
<dbReference type="EMBL" id="AK029333">
    <property type="protein sequence ID" value="BAC26400.1"/>
    <property type="molecule type" value="mRNA"/>
</dbReference>
<dbReference type="EMBL" id="BC059223">
    <property type="protein sequence ID" value="AAH59223.1"/>
    <property type="molecule type" value="mRNA"/>
</dbReference>
<dbReference type="CCDS" id="CCDS39358.1">
    <molecule id="Q6PCQ0-1"/>
</dbReference>
<dbReference type="CCDS" id="CCDS84987.1">
    <molecule id="Q6PCQ0-2"/>
</dbReference>
<dbReference type="RefSeq" id="NP_001334446.1">
    <molecule id="Q6PCQ0-2"/>
    <property type="nucleotide sequence ID" value="NM_001347517.1"/>
</dbReference>
<dbReference type="RefSeq" id="NP_083109.2">
    <molecule id="Q6PCQ0-1"/>
    <property type="nucleotide sequence ID" value="NM_028833.3"/>
</dbReference>
<dbReference type="SMR" id="Q6PCQ0"/>
<dbReference type="BioGRID" id="216599">
    <property type="interactions" value="6"/>
</dbReference>
<dbReference type="CORUM" id="Q6PCQ0"/>
<dbReference type="FunCoup" id="Q6PCQ0">
    <property type="interactions" value="685"/>
</dbReference>
<dbReference type="STRING" id="10090.ENSMUSP00000045913"/>
<dbReference type="GlyGen" id="Q6PCQ0">
    <property type="glycosylation" value="1 site, 1 N-linked glycan (1 site)"/>
</dbReference>
<dbReference type="iPTMnet" id="Q6PCQ0"/>
<dbReference type="PhosphoSitePlus" id="Q6PCQ0"/>
<dbReference type="SwissPalm" id="Q6PCQ0"/>
<dbReference type="PaxDb" id="10090-ENSMUSP00000045913"/>
<dbReference type="ProteomicsDB" id="269087">
    <molecule id="Q6PCQ0-1"/>
</dbReference>
<dbReference type="ProteomicsDB" id="269088">
    <molecule id="Q6PCQ0-2"/>
</dbReference>
<dbReference type="ProteomicsDB" id="269089">
    <molecule id="Q6PCQ0-3"/>
</dbReference>
<dbReference type="Pumba" id="Q6PCQ0"/>
<dbReference type="DNASU" id="74239"/>
<dbReference type="Ensembl" id="ENSMUST00000041783.14">
    <molecule id="Q6PCQ0-1"/>
    <property type="protein sequence ID" value="ENSMUSP00000045913.8"/>
    <property type="gene ID" value="ENSMUSG00000036555.15"/>
</dbReference>
<dbReference type="Ensembl" id="ENSMUST00000077890.12">
    <molecule id="Q6PCQ0-2"/>
    <property type="protein sequence ID" value="ENSMUSP00000077050.6"/>
    <property type="gene ID" value="ENSMUSG00000036555.15"/>
</dbReference>
<dbReference type="GeneID" id="74239"/>
<dbReference type="KEGG" id="mmu:74239"/>
<dbReference type="UCSC" id="uc009ahx.1">
    <molecule id="Q6PCQ0-1"/>
    <property type="organism name" value="mouse"/>
</dbReference>
<dbReference type="UCSC" id="uc009ahy.1">
    <molecule id="Q6PCQ0-2"/>
    <property type="organism name" value="mouse"/>
</dbReference>
<dbReference type="UCSC" id="uc009ahz.1">
    <molecule id="Q6PCQ0-3"/>
    <property type="organism name" value="mouse"/>
</dbReference>
<dbReference type="AGR" id="MGI:1921489"/>
<dbReference type="CTD" id="23288"/>
<dbReference type="MGI" id="MGI:1921489">
    <property type="gene designation" value="Iqce"/>
</dbReference>
<dbReference type="VEuPathDB" id="HostDB:ENSMUSG00000036555"/>
<dbReference type="eggNOG" id="ENOG502QUCA">
    <property type="taxonomic scope" value="Eukaryota"/>
</dbReference>
<dbReference type="GeneTree" id="ENSGT00940000163679"/>
<dbReference type="HOGENOM" id="CLU_015416_1_0_1"/>
<dbReference type="InParanoid" id="Q6PCQ0"/>
<dbReference type="OMA" id="TLISKCQ"/>
<dbReference type="OrthoDB" id="2136082at2759"/>
<dbReference type="PhylomeDB" id="Q6PCQ0"/>
<dbReference type="TreeFam" id="TF351136"/>
<dbReference type="BioGRID-ORCS" id="74239">
    <property type="hits" value="4 hits in 76 CRISPR screens"/>
</dbReference>
<dbReference type="PRO" id="PR:Q6PCQ0"/>
<dbReference type="Proteomes" id="UP000000589">
    <property type="component" value="Chromosome 5"/>
</dbReference>
<dbReference type="RNAct" id="Q6PCQ0">
    <property type="molecule type" value="protein"/>
</dbReference>
<dbReference type="Bgee" id="ENSMUSG00000036555">
    <property type="expression patterns" value="Expressed in spermatid and 218 other cell types or tissues"/>
</dbReference>
<dbReference type="ExpressionAtlas" id="Q6PCQ0">
    <property type="expression patterns" value="baseline and differential"/>
</dbReference>
<dbReference type="GO" id="GO:0060170">
    <property type="term" value="C:ciliary membrane"/>
    <property type="evidence" value="ECO:0000314"/>
    <property type="project" value="UniProtKB"/>
</dbReference>
<dbReference type="GO" id="GO:0009898">
    <property type="term" value="C:cytoplasmic side of plasma membrane"/>
    <property type="evidence" value="ECO:0000314"/>
    <property type="project" value="UniProtKB"/>
</dbReference>
<dbReference type="GO" id="GO:0005739">
    <property type="term" value="C:mitochondrion"/>
    <property type="evidence" value="ECO:0007005"/>
    <property type="project" value="MGI"/>
</dbReference>
<dbReference type="GO" id="GO:0098797">
    <property type="term" value="C:plasma membrane protein complex"/>
    <property type="evidence" value="ECO:0000314"/>
    <property type="project" value="UniProtKB"/>
</dbReference>
<dbReference type="GO" id="GO:0035108">
    <property type="term" value="P:limb morphogenesis"/>
    <property type="evidence" value="ECO:0000250"/>
    <property type="project" value="UniProtKB"/>
</dbReference>
<dbReference type="GO" id="GO:0045944">
    <property type="term" value="P:positive regulation of transcription by RNA polymerase II"/>
    <property type="evidence" value="ECO:0000315"/>
    <property type="project" value="UniProtKB"/>
</dbReference>
<dbReference type="GO" id="GO:0120229">
    <property type="term" value="P:protein localization to motile cilium"/>
    <property type="evidence" value="ECO:0000315"/>
    <property type="project" value="UniProtKB"/>
</dbReference>
<dbReference type="GO" id="GO:0008589">
    <property type="term" value="P:regulation of smoothened signaling pathway"/>
    <property type="evidence" value="ECO:0000315"/>
    <property type="project" value="UniProtKB"/>
</dbReference>
<dbReference type="CDD" id="cd23767">
    <property type="entry name" value="IQCD"/>
    <property type="match status" value="1"/>
</dbReference>
<dbReference type="FunFam" id="1.20.5.190:FF:000025">
    <property type="entry name" value="IQ motif containing E"/>
    <property type="match status" value="1"/>
</dbReference>
<dbReference type="Gene3D" id="1.20.5.190">
    <property type="match status" value="1"/>
</dbReference>
<dbReference type="InterPro" id="IPR052318">
    <property type="entry name" value="CellDiv_DevSignal_Domain"/>
</dbReference>
<dbReference type="InterPro" id="IPR000048">
    <property type="entry name" value="IQ_motif_EF-hand-BS"/>
</dbReference>
<dbReference type="InterPro" id="IPR027417">
    <property type="entry name" value="P-loop_NTPase"/>
</dbReference>
<dbReference type="PANTHER" id="PTHR22590:SF3">
    <property type="entry name" value="IQ DOMAIN-CONTAINING PROTEIN E"/>
    <property type="match status" value="1"/>
</dbReference>
<dbReference type="PANTHER" id="PTHR22590">
    <property type="entry name" value="MYOSIN MOTOR DOMAIN-CONTAINING PROTEIN"/>
    <property type="match status" value="1"/>
</dbReference>
<dbReference type="Pfam" id="PF00612">
    <property type="entry name" value="IQ"/>
    <property type="match status" value="2"/>
</dbReference>
<dbReference type="SMART" id="SM00015">
    <property type="entry name" value="IQ"/>
    <property type="match status" value="2"/>
</dbReference>
<dbReference type="SUPFAM" id="SSF52540">
    <property type="entry name" value="P-loop containing nucleoside triphosphate hydrolases"/>
    <property type="match status" value="1"/>
</dbReference>
<dbReference type="PROSITE" id="PS50096">
    <property type="entry name" value="IQ"/>
    <property type="match status" value="2"/>
</dbReference>
<feature type="chain" id="PRO_0000284111" description="IQ domain-containing protein E">
    <location>
        <begin position="1"/>
        <end position="778"/>
    </location>
</feature>
<feature type="domain" description="IQ 1" evidence="3">
    <location>
        <begin position="553"/>
        <end position="582"/>
    </location>
</feature>
<feature type="domain" description="IQ 2" evidence="3">
    <location>
        <begin position="615"/>
        <end position="644"/>
    </location>
</feature>
<feature type="region of interest" description="Disordered" evidence="4">
    <location>
        <begin position="1"/>
        <end position="71"/>
    </location>
</feature>
<feature type="region of interest" description="Disordered" evidence="4">
    <location>
        <begin position="83"/>
        <end position="108"/>
    </location>
</feature>
<feature type="region of interest" description="Disordered" evidence="4">
    <location>
        <begin position="348"/>
        <end position="392"/>
    </location>
</feature>
<feature type="region of interest" description="Disordered" evidence="4">
    <location>
        <begin position="443"/>
        <end position="462"/>
    </location>
</feature>
<feature type="region of interest" description="Disordered" evidence="4">
    <location>
        <begin position="474"/>
        <end position="529"/>
    </location>
</feature>
<feature type="region of interest" description="Disordered" evidence="4">
    <location>
        <begin position="573"/>
        <end position="612"/>
    </location>
</feature>
<feature type="region of interest" description="Disordered" evidence="4">
    <location>
        <begin position="651"/>
        <end position="778"/>
    </location>
</feature>
<feature type="coiled-coil region" evidence="2">
    <location>
        <begin position="157"/>
        <end position="323"/>
    </location>
</feature>
<feature type="coiled-coil region" evidence="2">
    <location>
        <begin position="398"/>
        <end position="486"/>
    </location>
</feature>
<feature type="compositionally biased region" description="Low complexity" evidence="4">
    <location>
        <begin position="37"/>
        <end position="49"/>
    </location>
</feature>
<feature type="compositionally biased region" description="Polar residues" evidence="4">
    <location>
        <begin position="83"/>
        <end position="101"/>
    </location>
</feature>
<feature type="compositionally biased region" description="Low complexity" evidence="4">
    <location>
        <begin position="352"/>
        <end position="362"/>
    </location>
</feature>
<feature type="compositionally biased region" description="Low complexity" evidence="4">
    <location>
        <begin position="581"/>
        <end position="598"/>
    </location>
</feature>
<feature type="compositionally biased region" description="Polar residues" evidence="4">
    <location>
        <begin position="651"/>
        <end position="662"/>
    </location>
</feature>
<feature type="compositionally biased region" description="Basic and acidic residues" evidence="4">
    <location>
        <begin position="672"/>
        <end position="686"/>
    </location>
</feature>
<feature type="compositionally biased region" description="Pro residues" evidence="4">
    <location>
        <begin position="739"/>
        <end position="752"/>
    </location>
</feature>
<feature type="modified residue" description="Phosphoserine" evidence="8">
    <location>
        <position position="322"/>
    </location>
</feature>
<feature type="modified residue" description="Phosphoserine" evidence="8">
    <location>
        <position position="661"/>
    </location>
</feature>
<feature type="splice variant" id="VSP_024436" description="In isoform 2 and isoform 3." evidence="6">
    <location>
        <begin position="87"/>
        <end position="131"/>
    </location>
</feature>
<feature type="splice variant" id="VSP_024437" description="In isoform 3." evidence="6">
    <original>PMVEKKLGVKRQKKM</original>
    <variation>YALMWGLSPVSLWRL</variation>
    <location>
        <begin position="276"/>
        <end position="290"/>
    </location>
</feature>
<feature type="splice variant" id="VSP_024438" description="In isoform 3." evidence="6">
    <location>
        <begin position="291"/>
        <end position="778"/>
    </location>
</feature>
<feature type="splice variant" id="VSP_024439" description="In isoform 2." evidence="6">
    <original>P</original>
    <variation>PGKNSEASSGEAAKDEDEAEEPPDLQPYS</variation>
    <location>
        <position position="669"/>
    </location>
</feature>
<feature type="sequence conflict" description="In Ref. 1; BAB24605." evidence="7" ref="1">
    <original>P</original>
    <variation>Q</variation>
    <location>
        <position position="587"/>
    </location>
</feature>
<evidence type="ECO:0000250" key="1">
    <source>
        <dbReference type="UniProtKB" id="Q6IPM2"/>
    </source>
</evidence>
<evidence type="ECO:0000255" key="2"/>
<evidence type="ECO:0000255" key="3">
    <source>
        <dbReference type="PROSITE-ProRule" id="PRU00116"/>
    </source>
</evidence>
<evidence type="ECO:0000256" key="4">
    <source>
        <dbReference type="SAM" id="MobiDB-lite"/>
    </source>
</evidence>
<evidence type="ECO:0000269" key="5">
    <source>
    </source>
</evidence>
<evidence type="ECO:0000303" key="6">
    <source>
    </source>
</evidence>
<evidence type="ECO:0000305" key="7"/>
<evidence type="ECO:0007744" key="8">
    <source>
    </source>
</evidence>
<organism>
    <name type="scientific">Mus musculus</name>
    <name type="common">Mouse</name>
    <dbReference type="NCBI Taxonomy" id="10090"/>
    <lineage>
        <taxon>Eukaryota</taxon>
        <taxon>Metazoa</taxon>
        <taxon>Chordata</taxon>
        <taxon>Craniata</taxon>
        <taxon>Vertebrata</taxon>
        <taxon>Euteleostomi</taxon>
        <taxon>Mammalia</taxon>
        <taxon>Eutheria</taxon>
        <taxon>Euarchontoglires</taxon>
        <taxon>Glires</taxon>
        <taxon>Rodentia</taxon>
        <taxon>Myomorpha</taxon>
        <taxon>Muroidea</taxon>
        <taxon>Muridae</taxon>
        <taxon>Murinae</taxon>
        <taxon>Mus</taxon>
        <taxon>Mus</taxon>
    </lineage>
</organism>
<keyword id="KW-0025">Alternative splicing</keyword>
<keyword id="KW-1003">Cell membrane</keyword>
<keyword id="KW-0966">Cell projection</keyword>
<keyword id="KW-0175">Coiled coil</keyword>
<keyword id="KW-0472">Membrane</keyword>
<keyword id="KW-0597">Phosphoprotein</keyword>
<keyword id="KW-1185">Reference proteome</keyword>
<keyword id="KW-0677">Repeat</keyword>
<reference key="1">
    <citation type="journal article" date="2005" name="Science">
        <title>The transcriptional landscape of the mammalian genome.</title>
        <authorList>
            <person name="Carninci P."/>
            <person name="Kasukawa T."/>
            <person name="Katayama S."/>
            <person name="Gough J."/>
            <person name="Frith M.C."/>
            <person name="Maeda N."/>
            <person name="Oyama R."/>
            <person name="Ravasi T."/>
            <person name="Lenhard B."/>
            <person name="Wells C."/>
            <person name="Kodzius R."/>
            <person name="Shimokawa K."/>
            <person name="Bajic V.B."/>
            <person name="Brenner S.E."/>
            <person name="Batalov S."/>
            <person name="Forrest A.R."/>
            <person name="Zavolan M."/>
            <person name="Davis M.J."/>
            <person name="Wilming L.G."/>
            <person name="Aidinis V."/>
            <person name="Allen J.E."/>
            <person name="Ambesi-Impiombato A."/>
            <person name="Apweiler R."/>
            <person name="Aturaliya R.N."/>
            <person name="Bailey T.L."/>
            <person name="Bansal M."/>
            <person name="Baxter L."/>
            <person name="Beisel K.W."/>
            <person name="Bersano T."/>
            <person name="Bono H."/>
            <person name="Chalk A.M."/>
            <person name="Chiu K.P."/>
            <person name="Choudhary V."/>
            <person name="Christoffels A."/>
            <person name="Clutterbuck D.R."/>
            <person name="Crowe M.L."/>
            <person name="Dalla E."/>
            <person name="Dalrymple B.P."/>
            <person name="de Bono B."/>
            <person name="Della Gatta G."/>
            <person name="di Bernardo D."/>
            <person name="Down T."/>
            <person name="Engstrom P."/>
            <person name="Fagiolini M."/>
            <person name="Faulkner G."/>
            <person name="Fletcher C.F."/>
            <person name="Fukushima T."/>
            <person name="Furuno M."/>
            <person name="Futaki S."/>
            <person name="Gariboldi M."/>
            <person name="Georgii-Hemming P."/>
            <person name="Gingeras T.R."/>
            <person name="Gojobori T."/>
            <person name="Green R.E."/>
            <person name="Gustincich S."/>
            <person name="Harbers M."/>
            <person name="Hayashi Y."/>
            <person name="Hensch T.K."/>
            <person name="Hirokawa N."/>
            <person name="Hill D."/>
            <person name="Huminiecki L."/>
            <person name="Iacono M."/>
            <person name="Ikeo K."/>
            <person name="Iwama A."/>
            <person name="Ishikawa T."/>
            <person name="Jakt M."/>
            <person name="Kanapin A."/>
            <person name="Katoh M."/>
            <person name="Kawasawa Y."/>
            <person name="Kelso J."/>
            <person name="Kitamura H."/>
            <person name="Kitano H."/>
            <person name="Kollias G."/>
            <person name="Krishnan S.P."/>
            <person name="Kruger A."/>
            <person name="Kummerfeld S.K."/>
            <person name="Kurochkin I.V."/>
            <person name="Lareau L.F."/>
            <person name="Lazarevic D."/>
            <person name="Lipovich L."/>
            <person name="Liu J."/>
            <person name="Liuni S."/>
            <person name="McWilliam S."/>
            <person name="Madan Babu M."/>
            <person name="Madera M."/>
            <person name="Marchionni L."/>
            <person name="Matsuda H."/>
            <person name="Matsuzawa S."/>
            <person name="Miki H."/>
            <person name="Mignone F."/>
            <person name="Miyake S."/>
            <person name="Morris K."/>
            <person name="Mottagui-Tabar S."/>
            <person name="Mulder N."/>
            <person name="Nakano N."/>
            <person name="Nakauchi H."/>
            <person name="Ng P."/>
            <person name="Nilsson R."/>
            <person name="Nishiguchi S."/>
            <person name="Nishikawa S."/>
            <person name="Nori F."/>
            <person name="Ohara O."/>
            <person name="Okazaki Y."/>
            <person name="Orlando V."/>
            <person name="Pang K.C."/>
            <person name="Pavan W.J."/>
            <person name="Pavesi G."/>
            <person name="Pesole G."/>
            <person name="Petrovsky N."/>
            <person name="Piazza S."/>
            <person name="Reed J."/>
            <person name="Reid J.F."/>
            <person name="Ring B.Z."/>
            <person name="Ringwald M."/>
            <person name="Rost B."/>
            <person name="Ruan Y."/>
            <person name="Salzberg S.L."/>
            <person name="Sandelin A."/>
            <person name="Schneider C."/>
            <person name="Schoenbach C."/>
            <person name="Sekiguchi K."/>
            <person name="Semple C.A."/>
            <person name="Seno S."/>
            <person name="Sessa L."/>
            <person name="Sheng Y."/>
            <person name="Shibata Y."/>
            <person name="Shimada H."/>
            <person name="Shimada K."/>
            <person name="Silva D."/>
            <person name="Sinclair B."/>
            <person name="Sperling S."/>
            <person name="Stupka E."/>
            <person name="Sugiura K."/>
            <person name="Sultana R."/>
            <person name="Takenaka Y."/>
            <person name="Taki K."/>
            <person name="Tammoja K."/>
            <person name="Tan S.L."/>
            <person name="Tang S."/>
            <person name="Taylor M.S."/>
            <person name="Tegner J."/>
            <person name="Teichmann S.A."/>
            <person name="Ueda H.R."/>
            <person name="van Nimwegen E."/>
            <person name="Verardo R."/>
            <person name="Wei C.L."/>
            <person name="Yagi K."/>
            <person name="Yamanishi H."/>
            <person name="Zabarovsky E."/>
            <person name="Zhu S."/>
            <person name="Zimmer A."/>
            <person name="Hide W."/>
            <person name="Bult C."/>
            <person name="Grimmond S.M."/>
            <person name="Teasdale R.D."/>
            <person name="Liu E.T."/>
            <person name="Brusic V."/>
            <person name="Quackenbush J."/>
            <person name="Wahlestedt C."/>
            <person name="Mattick J.S."/>
            <person name="Hume D.A."/>
            <person name="Kai C."/>
            <person name="Sasaki D."/>
            <person name="Tomaru Y."/>
            <person name="Fukuda S."/>
            <person name="Kanamori-Katayama M."/>
            <person name="Suzuki M."/>
            <person name="Aoki J."/>
            <person name="Arakawa T."/>
            <person name="Iida J."/>
            <person name="Imamura K."/>
            <person name="Itoh M."/>
            <person name="Kato T."/>
            <person name="Kawaji H."/>
            <person name="Kawagashira N."/>
            <person name="Kawashima T."/>
            <person name="Kojima M."/>
            <person name="Kondo S."/>
            <person name="Konno H."/>
            <person name="Nakano K."/>
            <person name="Ninomiya N."/>
            <person name="Nishio T."/>
            <person name="Okada M."/>
            <person name="Plessy C."/>
            <person name="Shibata K."/>
            <person name="Shiraki T."/>
            <person name="Suzuki S."/>
            <person name="Tagami M."/>
            <person name="Waki K."/>
            <person name="Watahiki A."/>
            <person name="Okamura-Oho Y."/>
            <person name="Suzuki H."/>
            <person name="Kawai J."/>
            <person name="Hayashizaki Y."/>
        </authorList>
    </citation>
    <scope>NUCLEOTIDE SEQUENCE [LARGE SCALE MRNA] (ISOFORMS 2 AND 3)</scope>
    <source>
        <strain>C57BL/6J</strain>
        <tissue>Head</tissue>
        <tissue>Testis</tissue>
    </source>
</reference>
<reference key="2">
    <citation type="journal article" date="2004" name="Genome Res.">
        <title>The status, quality, and expansion of the NIH full-length cDNA project: the Mammalian Gene Collection (MGC).</title>
        <authorList>
            <consortium name="The MGC Project Team"/>
        </authorList>
    </citation>
    <scope>NUCLEOTIDE SEQUENCE [LARGE SCALE MRNA] (ISOFORM 1)</scope>
    <source>
        <strain>C57BL/6J</strain>
        <tissue>Brain</tissue>
    </source>
</reference>
<reference key="3">
    <citation type="journal article" date="2010" name="Cell">
        <title>A tissue-specific atlas of mouse protein phosphorylation and expression.</title>
        <authorList>
            <person name="Huttlin E.L."/>
            <person name="Jedrychowski M.P."/>
            <person name="Elias J.E."/>
            <person name="Goswami T."/>
            <person name="Rad R."/>
            <person name="Beausoleil S.A."/>
            <person name="Villen J."/>
            <person name="Haas W."/>
            <person name="Sowa M.E."/>
            <person name="Gygi S.P."/>
        </authorList>
    </citation>
    <scope>PHOSPHORYLATION [LARGE SCALE ANALYSIS] AT SER-322 AND SER-661</scope>
    <scope>IDENTIFICATION BY MASS SPECTROMETRY [LARGE SCALE ANALYSIS]</scope>
    <source>
        <tissue>Pancreas</tissue>
    </source>
</reference>
<reference key="4">
    <citation type="journal article" date="2014" name="Dev. Cell">
        <title>EFCAB7 and IQCE regulate hedgehog signaling by tethering the EVC-EVC2 complex to the base of primary cilia.</title>
        <authorList>
            <person name="Pusapati G.V."/>
            <person name="Hughes C.E."/>
            <person name="Dorn K.V."/>
            <person name="Zhang D."/>
            <person name="Sugianto P."/>
            <person name="Aravind L."/>
            <person name="Rohatgi R."/>
        </authorList>
    </citation>
    <scope>FUNCTION</scope>
    <scope>IDENTIFICATION IN THE EVC COMPLEX</scope>
    <scope>INTERACTION WITH EFCAB7; EVC AND EVC2</scope>
    <scope>SUBCELLULAR LOCATION</scope>
    <scope>IDENTIFICATION BY MASS SPECTROMETRY</scope>
</reference>
<protein>
    <recommendedName>
        <fullName>IQ domain-containing protein E</fullName>
    </recommendedName>
</protein>
<gene>
    <name type="primary">Iqce</name>
</gene>
<sequence length="778" mass="86356">MSLGTTDIASETGDDSLSAITFESDIESKTKRKSFHKPPSTSPKSPYYSKPRKVTSWRSLKTAGSMPLSSRMSLTPQKLWLGSSKQGSVAQPPSPTLTSEHAWTHPPSCTPDYLTEAVRAKRADLRRSGSHGHVSGTSVYREKEDMYDEIIELKKSLHMQKSDVDLMRTKLRRLEEENSRKDRQIEQLLDPSRGPDFVRTLAEKKPDTGWVITGLKQRIFRLEQQCKEKDNTINKLQTDMKTTNLEEMRIAMETYYEEIHRLQTLLASSEATGKKPMVEKKLGVKRQKKMSSALLNLTRSVQELTEENQSLKEDLDRMLSNSPTISKIKGYGDWSKPRLLRRIAELEKKVSSSESPKQSTSELVNPNPLVRSPSNISVQKQPKGDQSPEDLPKVAPCEEQEHLQGTVKSLREELGALQEQLLEKDLEMKQLLQSKIDLEKELETAREGEKGRQEQEQALREEVEALTKKCQELEEAKREEKNSFVAVTHEAHPELHAPSPCSRHSEPDSDNSAGEEGSSQPPAPCSEERREAAIRTLQAQWKAHRRKKREAALDEAATVLQAAFRGHLARSKLVRSKVPDSRSPSLPGLLSPLNQSSPAPRVLSPISPAEENPTQEEAVIVIQSILRGYLAQARFIASCCREIAASSQRETVSLTPSGSASPPSLRASPGVIRKELCASEELRETSASEPAPSVPYSAQGGHGDCPSSSSLEAVPSMKDAMCEERSSSPRSAGPSLAEPSPPELQPLSPPPVEDICSDDSDDIIFSPFLPRKKSPSPF</sequence>
<proteinExistence type="evidence at protein level"/>
<name>IQCE_MOUSE</name>
<accession>Q6PCQ0</accession>
<accession>Q8CDZ1</accession>
<accession>Q9D9U3</accession>